<comment type="function">
    <text evidence="1">Catalyzes the transfer of the enolpyruvyl moiety of phosphoenolpyruvate (PEP) to the 5-hydroxyl of shikimate-3-phosphate (S3P) to produce enolpyruvyl shikimate-3-phosphate and inorganic phosphate.</text>
</comment>
<comment type="catalytic activity">
    <reaction evidence="1">
        <text>3-phosphoshikimate + phosphoenolpyruvate = 5-O-(1-carboxyvinyl)-3-phosphoshikimate + phosphate</text>
        <dbReference type="Rhea" id="RHEA:21256"/>
        <dbReference type="ChEBI" id="CHEBI:43474"/>
        <dbReference type="ChEBI" id="CHEBI:57701"/>
        <dbReference type="ChEBI" id="CHEBI:58702"/>
        <dbReference type="ChEBI" id="CHEBI:145989"/>
        <dbReference type="EC" id="2.5.1.19"/>
    </reaction>
    <physiologicalReaction direction="left-to-right" evidence="1">
        <dbReference type="Rhea" id="RHEA:21257"/>
    </physiologicalReaction>
</comment>
<comment type="pathway">
    <text evidence="1">Metabolic intermediate biosynthesis; chorismate biosynthesis; chorismate from D-erythrose 4-phosphate and phosphoenolpyruvate: step 6/7.</text>
</comment>
<comment type="subunit">
    <text evidence="1">Monomer.</text>
</comment>
<comment type="subcellular location">
    <subcellularLocation>
        <location evidence="1">Cytoplasm</location>
    </subcellularLocation>
</comment>
<comment type="similarity">
    <text evidence="1">Belongs to the EPSP synthase family.</text>
</comment>
<sequence>MIPKKTKLKSREIEVPGDKSLSHRSVLFAALSKGKSKVTGFLEAEDPLNTMSAFAKLGLKVQKVKPGEYEFESPGKNKLVSPNVDLDFGNAGTGIRLSAGLICGLPGINATLTGDNSLKKRPMGRIIKPLSSMGASIVGLGEKETAPLKIEGKKLKGFRYESPIASAQVKSCLMLAAISSETDLEYSENILSRDHTENMFRFLGNKIEQISPLHFKIKPPYVLNGGEFRVPGDISSAAFFLVLGVLAKEGNLLIKNIGLNPARTGILTALQSMGAKIEIQNKRIECGEPVGDLKTYPSNLKKSNIPESLIPSIIDEIPILSVAGFFAEGGFEIRHAEELRAKESDRIHTMVSNFRELGIEVEEYTDGYSFDGTSKKSSEVWTRLSTVKKIPIQSYMDHRIAMSFLIFKTLSGLDLQIDETSWIETSFPGFEKLLESCINE</sequence>
<evidence type="ECO:0000255" key="1">
    <source>
        <dbReference type="HAMAP-Rule" id="MF_00210"/>
    </source>
</evidence>
<organism>
    <name type="scientific">Leptospira interrogans serogroup Icterohaemorrhagiae serovar copenhageni (strain Fiocruz L1-130)</name>
    <dbReference type="NCBI Taxonomy" id="267671"/>
    <lineage>
        <taxon>Bacteria</taxon>
        <taxon>Pseudomonadati</taxon>
        <taxon>Spirochaetota</taxon>
        <taxon>Spirochaetia</taxon>
        <taxon>Leptospirales</taxon>
        <taxon>Leptospiraceae</taxon>
        <taxon>Leptospira</taxon>
    </lineage>
</organism>
<accession>Q72PM1</accession>
<dbReference type="EC" id="2.5.1.19" evidence="1"/>
<dbReference type="EMBL" id="AE016823">
    <property type="protein sequence ID" value="AAS71015.1"/>
    <property type="molecule type" value="Genomic_DNA"/>
</dbReference>
<dbReference type="RefSeq" id="WP_000612432.1">
    <property type="nucleotide sequence ID" value="NC_005823.1"/>
</dbReference>
<dbReference type="SMR" id="Q72PM1"/>
<dbReference type="GeneID" id="61142326"/>
<dbReference type="KEGG" id="lic:LIC_12449"/>
<dbReference type="HOGENOM" id="CLU_024321_0_1_12"/>
<dbReference type="UniPathway" id="UPA00053">
    <property type="reaction ID" value="UER00089"/>
</dbReference>
<dbReference type="Proteomes" id="UP000007037">
    <property type="component" value="Chromosome I"/>
</dbReference>
<dbReference type="GO" id="GO:0005737">
    <property type="term" value="C:cytoplasm"/>
    <property type="evidence" value="ECO:0007669"/>
    <property type="project" value="UniProtKB-SubCell"/>
</dbReference>
<dbReference type="GO" id="GO:0003866">
    <property type="term" value="F:3-phosphoshikimate 1-carboxyvinyltransferase activity"/>
    <property type="evidence" value="ECO:0007669"/>
    <property type="project" value="UniProtKB-UniRule"/>
</dbReference>
<dbReference type="GO" id="GO:0008652">
    <property type="term" value="P:amino acid biosynthetic process"/>
    <property type="evidence" value="ECO:0007669"/>
    <property type="project" value="UniProtKB-KW"/>
</dbReference>
<dbReference type="GO" id="GO:0009073">
    <property type="term" value="P:aromatic amino acid family biosynthetic process"/>
    <property type="evidence" value="ECO:0007669"/>
    <property type="project" value="UniProtKB-KW"/>
</dbReference>
<dbReference type="GO" id="GO:0009423">
    <property type="term" value="P:chorismate biosynthetic process"/>
    <property type="evidence" value="ECO:0007669"/>
    <property type="project" value="UniProtKB-UniRule"/>
</dbReference>
<dbReference type="CDD" id="cd01556">
    <property type="entry name" value="EPSP_synthase"/>
    <property type="match status" value="1"/>
</dbReference>
<dbReference type="FunFam" id="3.65.10.10:FF:000005">
    <property type="entry name" value="3-phosphoshikimate 1-carboxyvinyltransferase"/>
    <property type="match status" value="1"/>
</dbReference>
<dbReference type="Gene3D" id="3.65.10.10">
    <property type="entry name" value="Enolpyruvate transferase domain"/>
    <property type="match status" value="2"/>
</dbReference>
<dbReference type="HAMAP" id="MF_00210">
    <property type="entry name" value="EPSP_synth"/>
    <property type="match status" value="1"/>
</dbReference>
<dbReference type="InterPro" id="IPR001986">
    <property type="entry name" value="Enolpyruvate_Tfrase_dom"/>
</dbReference>
<dbReference type="InterPro" id="IPR036968">
    <property type="entry name" value="Enolpyruvate_Tfrase_sf"/>
</dbReference>
<dbReference type="InterPro" id="IPR006264">
    <property type="entry name" value="EPSP_synthase"/>
</dbReference>
<dbReference type="InterPro" id="IPR023193">
    <property type="entry name" value="EPSP_synthase_CS"/>
</dbReference>
<dbReference type="InterPro" id="IPR013792">
    <property type="entry name" value="RNA3'P_cycl/enolpyr_Trfase_a/b"/>
</dbReference>
<dbReference type="NCBIfam" id="TIGR01356">
    <property type="entry name" value="aroA"/>
    <property type="match status" value="1"/>
</dbReference>
<dbReference type="PANTHER" id="PTHR21090">
    <property type="entry name" value="AROM/DEHYDROQUINATE SYNTHASE"/>
    <property type="match status" value="1"/>
</dbReference>
<dbReference type="PANTHER" id="PTHR21090:SF5">
    <property type="entry name" value="PENTAFUNCTIONAL AROM POLYPEPTIDE"/>
    <property type="match status" value="1"/>
</dbReference>
<dbReference type="Pfam" id="PF00275">
    <property type="entry name" value="EPSP_synthase"/>
    <property type="match status" value="1"/>
</dbReference>
<dbReference type="PIRSF" id="PIRSF000505">
    <property type="entry name" value="EPSPS"/>
    <property type="match status" value="1"/>
</dbReference>
<dbReference type="SUPFAM" id="SSF55205">
    <property type="entry name" value="EPT/RTPC-like"/>
    <property type="match status" value="1"/>
</dbReference>
<dbReference type="PROSITE" id="PS00885">
    <property type="entry name" value="EPSP_SYNTHASE_2"/>
    <property type="match status" value="1"/>
</dbReference>
<keyword id="KW-0028">Amino-acid biosynthesis</keyword>
<keyword id="KW-0057">Aromatic amino acid biosynthesis</keyword>
<keyword id="KW-0963">Cytoplasm</keyword>
<keyword id="KW-0808">Transferase</keyword>
<name>AROA_LEPIC</name>
<proteinExistence type="inferred from homology"/>
<protein>
    <recommendedName>
        <fullName evidence="1">3-phosphoshikimate 1-carboxyvinyltransferase</fullName>
        <ecNumber evidence="1">2.5.1.19</ecNumber>
    </recommendedName>
    <alternativeName>
        <fullName evidence="1">5-enolpyruvylshikimate-3-phosphate synthase</fullName>
        <shortName evidence="1">EPSP synthase</shortName>
        <shortName evidence="1">EPSPS</shortName>
    </alternativeName>
</protein>
<gene>
    <name evidence="1" type="primary">aroA</name>
    <name type="ordered locus">LIC_12449</name>
</gene>
<feature type="chain" id="PRO_0000088266" description="3-phosphoshikimate 1-carboxyvinyltransferase">
    <location>
        <begin position="1"/>
        <end position="440"/>
    </location>
</feature>
<feature type="active site" description="Proton acceptor" evidence="1">
    <location>
        <position position="315"/>
    </location>
</feature>
<feature type="binding site" evidence="1">
    <location>
        <position position="19"/>
    </location>
    <ligand>
        <name>3-phosphoshikimate</name>
        <dbReference type="ChEBI" id="CHEBI:145989"/>
    </ligand>
</feature>
<feature type="binding site" evidence="1">
    <location>
        <position position="19"/>
    </location>
    <ligand>
        <name>phosphoenolpyruvate</name>
        <dbReference type="ChEBI" id="CHEBI:58702"/>
    </ligand>
</feature>
<feature type="binding site" evidence="1">
    <location>
        <position position="20"/>
    </location>
    <ligand>
        <name>3-phosphoshikimate</name>
        <dbReference type="ChEBI" id="CHEBI:145989"/>
    </ligand>
</feature>
<feature type="binding site" evidence="1">
    <location>
        <position position="24"/>
    </location>
    <ligand>
        <name>3-phosphoshikimate</name>
        <dbReference type="ChEBI" id="CHEBI:145989"/>
    </ligand>
</feature>
<feature type="binding site" evidence="1">
    <location>
        <position position="92"/>
    </location>
    <ligand>
        <name>phosphoenolpyruvate</name>
        <dbReference type="ChEBI" id="CHEBI:58702"/>
    </ligand>
</feature>
<feature type="binding site" evidence="1">
    <location>
        <position position="121"/>
    </location>
    <ligand>
        <name>phosphoenolpyruvate</name>
        <dbReference type="ChEBI" id="CHEBI:58702"/>
    </ligand>
</feature>
<feature type="binding site" evidence="1">
    <location>
        <position position="166"/>
    </location>
    <ligand>
        <name>3-phosphoshikimate</name>
        <dbReference type="ChEBI" id="CHEBI:145989"/>
    </ligand>
</feature>
<feature type="binding site" evidence="1">
    <location>
        <position position="168"/>
    </location>
    <ligand>
        <name>3-phosphoshikimate</name>
        <dbReference type="ChEBI" id="CHEBI:145989"/>
    </ligand>
</feature>
<feature type="binding site" evidence="1">
    <location>
        <position position="168"/>
    </location>
    <ligand>
        <name>phosphoenolpyruvate</name>
        <dbReference type="ChEBI" id="CHEBI:58702"/>
    </ligand>
</feature>
<feature type="binding site" evidence="1">
    <location>
        <position position="315"/>
    </location>
    <ligand>
        <name>3-phosphoshikimate</name>
        <dbReference type="ChEBI" id="CHEBI:145989"/>
    </ligand>
</feature>
<feature type="binding site" evidence="1">
    <location>
        <position position="342"/>
    </location>
    <ligand>
        <name>3-phosphoshikimate</name>
        <dbReference type="ChEBI" id="CHEBI:145989"/>
    </ligand>
</feature>
<feature type="binding site" evidence="1">
    <location>
        <position position="346"/>
    </location>
    <ligand>
        <name>phosphoenolpyruvate</name>
        <dbReference type="ChEBI" id="CHEBI:58702"/>
    </ligand>
</feature>
<feature type="binding site" evidence="1">
    <location>
        <position position="399"/>
    </location>
    <ligand>
        <name>phosphoenolpyruvate</name>
        <dbReference type="ChEBI" id="CHEBI:58702"/>
    </ligand>
</feature>
<reference key="1">
    <citation type="journal article" date="2004" name="J. Bacteriol.">
        <title>Comparative genomics of two Leptospira interrogans serovars reveals novel insights into physiology and pathogenesis.</title>
        <authorList>
            <person name="Nascimento A.L.T.O."/>
            <person name="Ko A.I."/>
            <person name="Martins E.A.L."/>
            <person name="Monteiro-Vitorello C.B."/>
            <person name="Ho P.L."/>
            <person name="Haake D.A."/>
            <person name="Verjovski-Almeida S."/>
            <person name="Hartskeerl R.A."/>
            <person name="Marques M.V."/>
            <person name="Oliveira M.C."/>
            <person name="Menck C.F.M."/>
            <person name="Leite L.C.C."/>
            <person name="Carrer H."/>
            <person name="Coutinho L.L."/>
            <person name="Degrave W.M."/>
            <person name="Dellagostin O.A."/>
            <person name="El-Dorry H."/>
            <person name="Ferro E.S."/>
            <person name="Ferro M.I.T."/>
            <person name="Furlan L.R."/>
            <person name="Gamberini M."/>
            <person name="Giglioti E.A."/>
            <person name="Goes-Neto A."/>
            <person name="Goldman G.H."/>
            <person name="Goldman M.H.S."/>
            <person name="Harakava R."/>
            <person name="Jeronimo S.M.B."/>
            <person name="Junqueira-de-Azevedo I.L.M."/>
            <person name="Kimura E.T."/>
            <person name="Kuramae E.E."/>
            <person name="Lemos E.G.M."/>
            <person name="Lemos M.V.F."/>
            <person name="Marino C.L."/>
            <person name="Nunes L.R."/>
            <person name="de Oliveira R.C."/>
            <person name="Pereira G.G."/>
            <person name="Reis M.S."/>
            <person name="Schriefer A."/>
            <person name="Siqueira W.J."/>
            <person name="Sommer P."/>
            <person name="Tsai S.M."/>
            <person name="Simpson A.J.G."/>
            <person name="Ferro J.A."/>
            <person name="Camargo L.E.A."/>
            <person name="Kitajima J.P."/>
            <person name="Setubal J.C."/>
            <person name="Van Sluys M.A."/>
        </authorList>
    </citation>
    <scope>NUCLEOTIDE SEQUENCE [LARGE SCALE GENOMIC DNA]</scope>
    <source>
        <strain>Fiocruz L1-130</strain>
    </source>
</reference>